<name>HRCA_BACAH</name>
<accession>A0RIT5</accession>
<protein>
    <recommendedName>
        <fullName evidence="1">Heat-inducible transcription repressor HrcA</fullName>
    </recommendedName>
</protein>
<organism>
    <name type="scientific">Bacillus thuringiensis (strain Al Hakam)</name>
    <dbReference type="NCBI Taxonomy" id="412694"/>
    <lineage>
        <taxon>Bacteria</taxon>
        <taxon>Bacillati</taxon>
        <taxon>Bacillota</taxon>
        <taxon>Bacilli</taxon>
        <taxon>Bacillales</taxon>
        <taxon>Bacillaceae</taxon>
        <taxon>Bacillus</taxon>
        <taxon>Bacillus cereus group</taxon>
    </lineage>
</organism>
<reference key="1">
    <citation type="journal article" date="2007" name="J. Bacteriol.">
        <title>The complete genome sequence of Bacillus thuringiensis Al Hakam.</title>
        <authorList>
            <person name="Challacombe J.F."/>
            <person name="Altherr M.R."/>
            <person name="Xie G."/>
            <person name="Bhotika S.S."/>
            <person name="Brown N."/>
            <person name="Bruce D."/>
            <person name="Campbell C.S."/>
            <person name="Campbell M.L."/>
            <person name="Chen J."/>
            <person name="Chertkov O."/>
            <person name="Cleland C."/>
            <person name="Dimitrijevic M."/>
            <person name="Doggett N.A."/>
            <person name="Fawcett J.J."/>
            <person name="Glavina T."/>
            <person name="Goodwin L.A."/>
            <person name="Green L.D."/>
            <person name="Han C.S."/>
            <person name="Hill K.K."/>
            <person name="Hitchcock P."/>
            <person name="Jackson P.J."/>
            <person name="Keim P."/>
            <person name="Kewalramani A.R."/>
            <person name="Longmire J."/>
            <person name="Lucas S."/>
            <person name="Malfatti S."/>
            <person name="Martinez D."/>
            <person name="McMurry K."/>
            <person name="Meincke L.J."/>
            <person name="Misra M."/>
            <person name="Moseman B.L."/>
            <person name="Mundt M."/>
            <person name="Munk A.C."/>
            <person name="Okinaka R.T."/>
            <person name="Parson-Quintana B."/>
            <person name="Reilly L.P."/>
            <person name="Richardson P."/>
            <person name="Robinson D.L."/>
            <person name="Saunders E."/>
            <person name="Tapia R."/>
            <person name="Tesmer J.G."/>
            <person name="Thayer N."/>
            <person name="Thompson L.S."/>
            <person name="Tice H."/>
            <person name="Ticknor L.O."/>
            <person name="Wills P.L."/>
            <person name="Gilna P."/>
            <person name="Brettin T.S."/>
        </authorList>
    </citation>
    <scope>NUCLEOTIDE SEQUENCE [LARGE SCALE GENOMIC DNA]</scope>
    <source>
        <strain>Al Hakam</strain>
    </source>
</reference>
<sequence length="338" mass="37862">MLTERQLLILQTIIDDFIGSAQPVGSRTLAKKDAITFSSATIRNEMADLEELGFIEKTHSSSGRVPSEKGYRFYVDHLLAPQNLPKDEIVQIKDLFAERIFEAEKIAQQSAQILSELTNYTAIVLGPKLSTNKLKNVQIVSLDRQTAVAIIVTDTGHVQSKTITVPESVDLSDLEKMVNILNEKLSGVPMSELHNKIFKEIVTVLRGYVHNYDSAIKMLDGTFQVPLSEKIYFGGKANMLSQPEFHDIHKVRSLLTMIDNEAEFYDILRHKQVGIQVKIGRENSATAMEDCSLISATYSIGEEQLGTIAILGPTRMQYSRVISLLQLFTRQFTDGLKK</sequence>
<evidence type="ECO:0000255" key="1">
    <source>
        <dbReference type="HAMAP-Rule" id="MF_00081"/>
    </source>
</evidence>
<comment type="function">
    <text evidence="1">Negative regulator of class I heat shock genes (grpE-dnaK-dnaJ and groELS operons). Prevents heat-shock induction of these operons.</text>
</comment>
<comment type="similarity">
    <text evidence="1">Belongs to the HrcA family.</text>
</comment>
<gene>
    <name evidence="1" type="primary">hrcA</name>
    <name type="ordered locus">BALH_3906</name>
</gene>
<keyword id="KW-0678">Repressor</keyword>
<keyword id="KW-0346">Stress response</keyword>
<keyword id="KW-0804">Transcription</keyword>
<keyword id="KW-0805">Transcription regulation</keyword>
<proteinExistence type="inferred from homology"/>
<dbReference type="EMBL" id="CP000485">
    <property type="protein sequence ID" value="ABK87128.1"/>
    <property type="molecule type" value="Genomic_DNA"/>
</dbReference>
<dbReference type="RefSeq" id="WP_000954940.1">
    <property type="nucleotide sequence ID" value="NC_008600.1"/>
</dbReference>
<dbReference type="SMR" id="A0RIT5"/>
<dbReference type="KEGG" id="btl:BALH_3906"/>
<dbReference type="HOGENOM" id="CLU_050019_1_0_9"/>
<dbReference type="GO" id="GO:0003677">
    <property type="term" value="F:DNA binding"/>
    <property type="evidence" value="ECO:0007669"/>
    <property type="project" value="InterPro"/>
</dbReference>
<dbReference type="GO" id="GO:0045892">
    <property type="term" value="P:negative regulation of DNA-templated transcription"/>
    <property type="evidence" value="ECO:0007669"/>
    <property type="project" value="UniProtKB-UniRule"/>
</dbReference>
<dbReference type="FunFam" id="1.10.10.10:FF:000049">
    <property type="entry name" value="Heat-inducible transcription repressor HrcA"/>
    <property type="match status" value="1"/>
</dbReference>
<dbReference type="FunFam" id="3.30.390.60:FF:000001">
    <property type="entry name" value="Heat-inducible transcription repressor HrcA"/>
    <property type="match status" value="1"/>
</dbReference>
<dbReference type="Gene3D" id="3.30.450.40">
    <property type="match status" value="1"/>
</dbReference>
<dbReference type="Gene3D" id="3.30.390.60">
    <property type="entry name" value="Heat-inducible transcription repressor hrca homolog, domain 3"/>
    <property type="match status" value="1"/>
</dbReference>
<dbReference type="Gene3D" id="1.10.10.10">
    <property type="entry name" value="Winged helix-like DNA-binding domain superfamily/Winged helix DNA-binding domain"/>
    <property type="match status" value="1"/>
</dbReference>
<dbReference type="HAMAP" id="MF_00081">
    <property type="entry name" value="HrcA"/>
    <property type="match status" value="1"/>
</dbReference>
<dbReference type="InterPro" id="IPR029016">
    <property type="entry name" value="GAF-like_dom_sf"/>
</dbReference>
<dbReference type="InterPro" id="IPR002571">
    <property type="entry name" value="HrcA"/>
</dbReference>
<dbReference type="InterPro" id="IPR021153">
    <property type="entry name" value="HrcA_C"/>
</dbReference>
<dbReference type="InterPro" id="IPR036388">
    <property type="entry name" value="WH-like_DNA-bd_sf"/>
</dbReference>
<dbReference type="InterPro" id="IPR036390">
    <property type="entry name" value="WH_DNA-bd_sf"/>
</dbReference>
<dbReference type="InterPro" id="IPR023120">
    <property type="entry name" value="WHTH_transcript_rep_HrcA_IDD"/>
</dbReference>
<dbReference type="NCBIfam" id="TIGR00331">
    <property type="entry name" value="hrcA"/>
    <property type="match status" value="1"/>
</dbReference>
<dbReference type="PANTHER" id="PTHR34824">
    <property type="entry name" value="HEAT-INDUCIBLE TRANSCRIPTION REPRESSOR HRCA"/>
    <property type="match status" value="1"/>
</dbReference>
<dbReference type="PANTHER" id="PTHR34824:SF1">
    <property type="entry name" value="HEAT-INDUCIBLE TRANSCRIPTION REPRESSOR HRCA"/>
    <property type="match status" value="1"/>
</dbReference>
<dbReference type="Pfam" id="PF01628">
    <property type="entry name" value="HrcA"/>
    <property type="match status" value="1"/>
</dbReference>
<dbReference type="PIRSF" id="PIRSF005485">
    <property type="entry name" value="HrcA"/>
    <property type="match status" value="1"/>
</dbReference>
<dbReference type="SUPFAM" id="SSF55781">
    <property type="entry name" value="GAF domain-like"/>
    <property type="match status" value="1"/>
</dbReference>
<dbReference type="SUPFAM" id="SSF46785">
    <property type="entry name" value="Winged helix' DNA-binding domain"/>
    <property type="match status" value="1"/>
</dbReference>
<feature type="chain" id="PRO_1000010377" description="Heat-inducible transcription repressor HrcA">
    <location>
        <begin position="1"/>
        <end position="338"/>
    </location>
</feature>